<name>GEMI6_HUMAN</name>
<accession>Q8WXD5</accession>
<accession>B2RDP8</accession>
<accession>Q53SI5</accession>
<accession>Q8WVB4</accession>
<accession>Q9H5G6</accession>
<reference key="1">
    <citation type="journal article" date="2002" name="J. Biol. Chem.">
        <title>Purification of native survival of motor neurons complexes and identification of Gemin6 as a novel component.</title>
        <authorList>
            <person name="Pellizzoni L."/>
            <person name="Baccon J."/>
            <person name="Rappsilber J."/>
            <person name="Mann M."/>
            <person name="Dreyfuss G."/>
        </authorList>
    </citation>
    <scope>NUCLEOTIDE SEQUENCE [MRNA]</scope>
    <scope>PROTEIN SEQUENCE OF 155-167</scope>
    <scope>FUNCTION</scope>
    <scope>INTERACTION WITH SNRPB; SNRPD2; SNRPD3 AND SNRPE</scope>
    <scope>SUBCELLULAR LOCATION</scope>
</reference>
<reference key="2">
    <citation type="journal article" date="2004" name="Nat. Genet.">
        <title>Complete sequencing and characterization of 21,243 full-length human cDNAs.</title>
        <authorList>
            <person name="Ota T."/>
            <person name="Suzuki Y."/>
            <person name="Nishikawa T."/>
            <person name="Otsuki T."/>
            <person name="Sugiyama T."/>
            <person name="Irie R."/>
            <person name="Wakamatsu A."/>
            <person name="Hayashi K."/>
            <person name="Sato H."/>
            <person name="Nagai K."/>
            <person name="Kimura K."/>
            <person name="Makita H."/>
            <person name="Sekine M."/>
            <person name="Obayashi M."/>
            <person name="Nishi T."/>
            <person name="Shibahara T."/>
            <person name="Tanaka T."/>
            <person name="Ishii S."/>
            <person name="Yamamoto J."/>
            <person name="Saito K."/>
            <person name="Kawai Y."/>
            <person name="Isono Y."/>
            <person name="Nakamura Y."/>
            <person name="Nagahari K."/>
            <person name="Murakami K."/>
            <person name="Yasuda T."/>
            <person name="Iwayanagi T."/>
            <person name="Wagatsuma M."/>
            <person name="Shiratori A."/>
            <person name="Sudo H."/>
            <person name="Hosoiri T."/>
            <person name="Kaku Y."/>
            <person name="Kodaira H."/>
            <person name="Kondo H."/>
            <person name="Sugawara M."/>
            <person name="Takahashi M."/>
            <person name="Kanda K."/>
            <person name="Yokoi T."/>
            <person name="Furuya T."/>
            <person name="Kikkawa E."/>
            <person name="Omura Y."/>
            <person name="Abe K."/>
            <person name="Kamihara K."/>
            <person name="Katsuta N."/>
            <person name="Sato K."/>
            <person name="Tanikawa M."/>
            <person name="Yamazaki M."/>
            <person name="Ninomiya K."/>
            <person name="Ishibashi T."/>
            <person name="Yamashita H."/>
            <person name="Murakawa K."/>
            <person name="Fujimori K."/>
            <person name="Tanai H."/>
            <person name="Kimata M."/>
            <person name="Watanabe M."/>
            <person name="Hiraoka S."/>
            <person name="Chiba Y."/>
            <person name="Ishida S."/>
            <person name="Ono Y."/>
            <person name="Takiguchi S."/>
            <person name="Watanabe S."/>
            <person name="Yosida M."/>
            <person name="Hotuta T."/>
            <person name="Kusano J."/>
            <person name="Kanehori K."/>
            <person name="Takahashi-Fujii A."/>
            <person name="Hara H."/>
            <person name="Tanase T.-O."/>
            <person name="Nomura Y."/>
            <person name="Togiya S."/>
            <person name="Komai F."/>
            <person name="Hara R."/>
            <person name="Takeuchi K."/>
            <person name="Arita M."/>
            <person name="Imose N."/>
            <person name="Musashino K."/>
            <person name="Yuuki H."/>
            <person name="Oshima A."/>
            <person name="Sasaki N."/>
            <person name="Aotsuka S."/>
            <person name="Yoshikawa Y."/>
            <person name="Matsunawa H."/>
            <person name="Ichihara T."/>
            <person name="Shiohata N."/>
            <person name="Sano S."/>
            <person name="Moriya S."/>
            <person name="Momiyama H."/>
            <person name="Satoh N."/>
            <person name="Takami S."/>
            <person name="Terashima Y."/>
            <person name="Suzuki O."/>
            <person name="Nakagawa S."/>
            <person name="Senoh A."/>
            <person name="Mizoguchi H."/>
            <person name="Goto Y."/>
            <person name="Shimizu F."/>
            <person name="Wakebe H."/>
            <person name="Hishigaki H."/>
            <person name="Watanabe T."/>
            <person name="Sugiyama A."/>
            <person name="Takemoto M."/>
            <person name="Kawakami B."/>
            <person name="Yamazaki M."/>
            <person name="Watanabe K."/>
            <person name="Kumagai A."/>
            <person name="Itakura S."/>
            <person name="Fukuzumi Y."/>
            <person name="Fujimori Y."/>
            <person name="Komiyama M."/>
            <person name="Tashiro H."/>
            <person name="Tanigami A."/>
            <person name="Fujiwara T."/>
            <person name="Ono T."/>
            <person name="Yamada K."/>
            <person name="Fujii Y."/>
            <person name="Ozaki K."/>
            <person name="Hirao M."/>
            <person name="Ohmori Y."/>
            <person name="Kawabata A."/>
            <person name="Hikiji T."/>
            <person name="Kobatake N."/>
            <person name="Inagaki H."/>
            <person name="Ikema Y."/>
            <person name="Okamoto S."/>
            <person name="Okitani R."/>
            <person name="Kawakami T."/>
            <person name="Noguchi S."/>
            <person name="Itoh T."/>
            <person name="Shigeta K."/>
            <person name="Senba T."/>
            <person name="Matsumura K."/>
            <person name="Nakajima Y."/>
            <person name="Mizuno T."/>
            <person name="Morinaga M."/>
            <person name="Sasaki M."/>
            <person name="Togashi T."/>
            <person name="Oyama M."/>
            <person name="Hata H."/>
            <person name="Watanabe M."/>
            <person name="Komatsu T."/>
            <person name="Mizushima-Sugano J."/>
            <person name="Satoh T."/>
            <person name="Shirai Y."/>
            <person name="Takahashi Y."/>
            <person name="Nakagawa K."/>
            <person name="Okumura K."/>
            <person name="Nagase T."/>
            <person name="Nomura N."/>
            <person name="Kikuchi H."/>
            <person name="Masuho Y."/>
            <person name="Yamashita R."/>
            <person name="Nakai K."/>
            <person name="Yada T."/>
            <person name="Nakamura Y."/>
            <person name="Ohara O."/>
            <person name="Isogai T."/>
            <person name="Sugano S."/>
        </authorList>
    </citation>
    <scope>NUCLEOTIDE SEQUENCE [LARGE SCALE MRNA]</scope>
    <source>
        <tissue>Small intestine</tissue>
    </source>
</reference>
<reference key="3">
    <citation type="journal article" date="2005" name="Nature">
        <title>Generation and annotation of the DNA sequences of human chromosomes 2 and 4.</title>
        <authorList>
            <person name="Hillier L.W."/>
            <person name="Graves T.A."/>
            <person name="Fulton R.S."/>
            <person name="Fulton L.A."/>
            <person name="Pepin K.H."/>
            <person name="Minx P."/>
            <person name="Wagner-McPherson C."/>
            <person name="Layman D."/>
            <person name="Wylie K."/>
            <person name="Sekhon M."/>
            <person name="Becker M.C."/>
            <person name="Fewell G.A."/>
            <person name="Delehaunty K.D."/>
            <person name="Miner T.L."/>
            <person name="Nash W.E."/>
            <person name="Kremitzki C."/>
            <person name="Oddy L."/>
            <person name="Du H."/>
            <person name="Sun H."/>
            <person name="Bradshaw-Cordum H."/>
            <person name="Ali J."/>
            <person name="Carter J."/>
            <person name="Cordes M."/>
            <person name="Harris A."/>
            <person name="Isak A."/>
            <person name="van Brunt A."/>
            <person name="Nguyen C."/>
            <person name="Du F."/>
            <person name="Courtney L."/>
            <person name="Kalicki J."/>
            <person name="Ozersky P."/>
            <person name="Abbott S."/>
            <person name="Armstrong J."/>
            <person name="Belter E.A."/>
            <person name="Caruso L."/>
            <person name="Cedroni M."/>
            <person name="Cotton M."/>
            <person name="Davidson T."/>
            <person name="Desai A."/>
            <person name="Elliott G."/>
            <person name="Erb T."/>
            <person name="Fronick C."/>
            <person name="Gaige T."/>
            <person name="Haakenson W."/>
            <person name="Haglund K."/>
            <person name="Holmes A."/>
            <person name="Harkins R."/>
            <person name="Kim K."/>
            <person name="Kruchowski S.S."/>
            <person name="Strong C.M."/>
            <person name="Grewal N."/>
            <person name="Goyea E."/>
            <person name="Hou S."/>
            <person name="Levy A."/>
            <person name="Martinka S."/>
            <person name="Mead K."/>
            <person name="McLellan M.D."/>
            <person name="Meyer R."/>
            <person name="Randall-Maher J."/>
            <person name="Tomlinson C."/>
            <person name="Dauphin-Kohlberg S."/>
            <person name="Kozlowicz-Reilly A."/>
            <person name="Shah N."/>
            <person name="Swearengen-Shahid S."/>
            <person name="Snider J."/>
            <person name="Strong J.T."/>
            <person name="Thompson J."/>
            <person name="Yoakum M."/>
            <person name="Leonard S."/>
            <person name="Pearman C."/>
            <person name="Trani L."/>
            <person name="Radionenko M."/>
            <person name="Waligorski J.E."/>
            <person name="Wang C."/>
            <person name="Rock S.M."/>
            <person name="Tin-Wollam A.-M."/>
            <person name="Maupin R."/>
            <person name="Latreille P."/>
            <person name="Wendl M.C."/>
            <person name="Yang S.-P."/>
            <person name="Pohl C."/>
            <person name="Wallis J.W."/>
            <person name="Spieth J."/>
            <person name="Bieri T.A."/>
            <person name="Berkowicz N."/>
            <person name="Nelson J.O."/>
            <person name="Osborne J."/>
            <person name="Ding L."/>
            <person name="Meyer R."/>
            <person name="Sabo A."/>
            <person name="Shotland Y."/>
            <person name="Sinha P."/>
            <person name="Wohldmann P.E."/>
            <person name="Cook L.L."/>
            <person name="Hickenbotham M.T."/>
            <person name="Eldred J."/>
            <person name="Williams D."/>
            <person name="Jones T.A."/>
            <person name="She X."/>
            <person name="Ciccarelli F.D."/>
            <person name="Izaurralde E."/>
            <person name="Taylor J."/>
            <person name="Schmutz J."/>
            <person name="Myers R.M."/>
            <person name="Cox D.R."/>
            <person name="Huang X."/>
            <person name="McPherson J.D."/>
            <person name="Mardis E.R."/>
            <person name="Clifton S.W."/>
            <person name="Warren W.C."/>
            <person name="Chinwalla A.T."/>
            <person name="Eddy S.R."/>
            <person name="Marra M.A."/>
            <person name="Ovcharenko I."/>
            <person name="Furey T.S."/>
            <person name="Miller W."/>
            <person name="Eichler E.E."/>
            <person name="Bork P."/>
            <person name="Suyama M."/>
            <person name="Torrents D."/>
            <person name="Waterston R.H."/>
            <person name="Wilson R.K."/>
        </authorList>
    </citation>
    <scope>NUCLEOTIDE SEQUENCE [LARGE SCALE GENOMIC DNA]</scope>
</reference>
<reference key="4">
    <citation type="submission" date="2005-09" db="EMBL/GenBank/DDBJ databases">
        <authorList>
            <person name="Mural R.J."/>
            <person name="Istrail S."/>
            <person name="Sutton G.G."/>
            <person name="Florea L."/>
            <person name="Halpern A.L."/>
            <person name="Mobarry C.M."/>
            <person name="Lippert R."/>
            <person name="Walenz B."/>
            <person name="Shatkay H."/>
            <person name="Dew I."/>
            <person name="Miller J.R."/>
            <person name="Flanigan M.J."/>
            <person name="Edwards N.J."/>
            <person name="Bolanos R."/>
            <person name="Fasulo D."/>
            <person name="Halldorsson B.V."/>
            <person name="Hannenhalli S."/>
            <person name="Turner R."/>
            <person name="Yooseph S."/>
            <person name="Lu F."/>
            <person name="Nusskern D.R."/>
            <person name="Shue B.C."/>
            <person name="Zheng X.H."/>
            <person name="Zhong F."/>
            <person name="Delcher A.L."/>
            <person name="Huson D.H."/>
            <person name="Kravitz S.A."/>
            <person name="Mouchard L."/>
            <person name="Reinert K."/>
            <person name="Remington K.A."/>
            <person name="Clark A.G."/>
            <person name="Waterman M.S."/>
            <person name="Eichler E.E."/>
            <person name="Adams M.D."/>
            <person name="Hunkapiller M.W."/>
            <person name="Myers E.W."/>
            <person name="Venter J.C."/>
        </authorList>
    </citation>
    <scope>NUCLEOTIDE SEQUENCE [LARGE SCALE GENOMIC DNA]</scope>
</reference>
<reference key="5">
    <citation type="journal article" date="2004" name="Genome Res.">
        <title>The status, quality, and expansion of the NIH full-length cDNA project: the Mammalian Gene Collection (MGC).</title>
        <authorList>
            <consortium name="The MGC Project Team"/>
        </authorList>
    </citation>
    <scope>NUCLEOTIDE SEQUENCE [LARGE SCALE MRNA]</scope>
    <scope>VARIANT ASP-140</scope>
    <source>
        <tissue>Ovary</tissue>
    </source>
</reference>
<reference key="6">
    <citation type="journal article" date="2002" name="J. Biol. Chem.">
        <title>Identification and characterization of Gemin7, a novel component of the survival of motor neuron complex.</title>
        <authorList>
            <person name="Baccon J."/>
            <person name="Pellizzoni L."/>
            <person name="Rappsilber J."/>
            <person name="Mann M."/>
            <person name="Dreyfuss G."/>
        </authorList>
    </citation>
    <scope>INTERACTION WITH GEMIN7</scope>
</reference>
<reference key="7">
    <citation type="journal article" date="2005" name="Mol. Cell. Biol.">
        <title>Specific sequence features, recognized by the SMN complex, identify snRNAs and determine their fate as snRNPs.</title>
        <authorList>
            <person name="Golembe T.J."/>
            <person name="Yong J."/>
            <person name="Dreyfuss G."/>
        </authorList>
    </citation>
    <scope>FUNCTION</scope>
    <scope>IDENTIFICATION IN THE SMN COMPLEX</scope>
    <scope>IDENTIFICATION IN SMN-SM COMPLEX</scope>
</reference>
<reference key="8">
    <citation type="journal article" date="2007" name="J. Biol. Chem.">
        <title>A comprehensive interaction map of the human survival of motor neuron (SMN) complex.</title>
        <authorList>
            <person name="Otter S."/>
            <person name="Grimmler M."/>
            <person name="Neuenkirchen N."/>
            <person name="Chari A."/>
            <person name="Sickmann A."/>
            <person name="Fischer U."/>
        </authorList>
    </citation>
    <scope>IDENTIFICATION IN THE SMN COMPLEX</scope>
    <scope>INTERACTION WITH GEMIN7</scope>
</reference>
<reference key="9">
    <citation type="journal article" date="2008" name="Cell">
        <title>An assembly chaperone collaborates with the SMN complex to generate spliceosomal SnRNPs.</title>
        <authorList>
            <person name="Chari A."/>
            <person name="Golas M.M."/>
            <person name="Klingenhager M."/>
            <person name="Neuenkirchen N."/>
            <person name="Sander B."/>
            <person name="Englbrecht C."/>
            <person name="Sickmann A."/>
            <person name="Stark H."/>
            <person name="Fischer U."/>
        </authorList>
    </citation>
    <scope>FUNCTION IN SNRNP BIOGENESIS</scope>
    <scope>IDENTIFICATION IN SMN-SM COMPLEX</scope>
</reference>
<reference key="10">
    <citation type="journal article" date="2008" name="Mol. Cell">
        <title>Kinase-selective enrichment enables quantitative phosphoproteomics of the kinome across the cell cycle.</title>
        <authorList>
            <person name="Daub H."/>
            <person name="Olsen J.V."/>
            <person name="Bairlein M."/>
            <person name="Gnad F."/>
            <person name="Oppermann F.S."/>
            <person name="Korner R."/>
            <person name="Greff Z."/>
            <person name="Keri G."/>
            <person name="Stemmann O."/>
            <person name="Mann M."/>
        </authorList>
    </citation>
    <scope>IDENTIFICATION BY MASS SPECTROMETRY [LARGE SCALE ANALYSIS]</scope>
    <source>
        <tissue>Cervix carcinoma</tissue>
    </source>
</reference>
<reference key="11">
    <citation type="journal article" date="2010" name="Sci. Signal.">
        <title>Quantitative phosphoproteomics reveals widespread full phosphorylation site occupancy during mitosis.</title>
        <authorList>
            <person name="Olsen J.V."/>
            <person name="Vermeulen M."/>
            <person name="Santamaria A."/>
            <person name="Kumar C."/>
            <person name="Miller M.L."/>
            <person name="Jensen L.J."/>
            <person name="Gnad F."/>
            <person name="Cox J."/>
            <person name="Jensen T.S."/>
            <person name="Nigg E.A."/>
            <person name="Brunak S."/>
            <person name="Mann M."/>
        </authorList>
    </citation>
    <scope>PHOSPHORYLATION [LARGE SCALE ANALYSIS] AT SER-166</scope>
    <scope>IDENTIFICATION BY MASS SPECTROMETRY [LARGE SCALE ANALYSIS]</scope>
    <source>
        <tissue>Cervix carcinoma</tissue>
    </source>
</reference>
<reference key="12">
    <citation type="journal article" date="2011" name="BMC Syst. Biol.">
        <title>Initial characterization of the human central proteome.</title>
        <authorList>
            <person name="Burkard T.R."/>
            <person name="Planyavsky M."/>
            <person name="Kaupe I."/>
            <person name="Breitwieser F.P."/>
            <person name="Buerckstuemmer T."/>
            <person name="Bennett K.L."/>
            <person name="Superti-Furga G."/>
            <person name="Colinge J."/>
        </authorList>
    </citation>
    <scope>IDENTIFICATION BY MASS SPECTROMETRY [LARGE SCALE ANALYSIS]</scope>
</reference>
<reference key="13">
    <citation type="journal article" date="2013" name="J. Proteome Res.">
        <title>Toward a comprehensive characterization of a human cancer cell phosphoproteome.</title>
        <authorList>
            <person name="Zhou H."/>
            <person name="Di Palma S."/>
            <person name="Preisinger C."/>
            <person name="Peng M."/>
            <person name="Polat A.N."/>
            <person name="Heck A.J."/>
            <person name="Mohammed S."/>
        </authorList>
    </citation>
    <scope>PHOSPHORYLATION [LARGE SCALE ANALYSIS] AT SER-95</scope>
    <scope>IDENTIFICATION BY MASS SPECTROMETRY [LARGE SCALE ANALYSIS]</scope>
    <source>
        <tissue>Cervix carcinoma</tissue>
        <tissue>Erythroleukemia</tissue>
    </source>
</reference>
<reference key="14">
    <citation type="journal article" date="2005" name="Structure">
        <title>The Gemin6-Gemin7 heterodimer from the survival of motor neurons complex has an Sm protein-like structure.</title>
        <authorList>
            <person name="Ma Y."/>
            <person name="Dostie J."/>
            <person name="Dreyfuss G."/>
            <person name="Van Duyne G.D."/>
        </authorList>
    </citation>
    <scope>X-RAY CRYSTALLOGRAPHY (2.0 ANGSTROMS) OF 1-86 IN COMPLEX WITH GEMIN7</scope>
    <scope>INTERACTION WITH SNRPB; SNRPD2; SNRPD3 AND SNRPE</scope>
</reference>
<reference evidence="12" key="15">
    <citation type="journal article" date="2021" name="Nucleic Acids Res.">
        <title>Identification and structural analysis of the Schizosaccharomyces pombe SMN complex.</title>
        <authorList>
            <person name="Veepaschit J."/>
            <person name="Viswanathan A."/>
            <person name="Bordonne R."/>
            <person name="Grimm C."/>
            <person name="Fischer U."/>
        </authorList>
    </citation>
    <scope>X-RAY CRYSTALLOGRAPHY (1.52 ANGSTROMS) OF 1-92</scope>
    <scope>INTERACTION WITH GEMIN7 AND GEMIN8</scope>
</reference>
<proteinExistence type="evidence at protein level"/>
<organism>
    <name type="scientific">Homo sapiens</name>
    <name type="common">Human</name>
    <dbReference type="NCBI Taxonomy" id="9606"/>
    <lineage>
        <taxon>Eukaryota</taxon>
        <taxon>Metazoa</taxon>
        <taxon>Chordata</taxon>
        <taxon>Craniata</taxon>
        <taxon>Vertebrata</taxon>
        <taxon>Euteleostomi</taxon>
        <taxon>Mammalia</taxon>
        <taxon>Eutheria</taxon>
        <taxon>Euarchontoglires</taxon>
        <taxon>Primates</taxon>
        <taxon>Haplorrhini</taxon>
        <taxon>Catarrhini</taxon>
        <taxon>Hominidae</taxon>
        <taxon>Homo</taxon>
    </lineage>
</organism>
<keyword id="KW-0002">3D-structure</keyword>
<keyword id="KW-0963">Cytoplasm</keyword>
<keyword id="KW-0903">Direct protein sequencing</keyword>
<keyword id="KW-0507">mRNA processing</keyword>
<keyword id="KW-0508">mRNA splicing</keyword>
<keyword id="KW-0539">Nucleus</keyword>
<keyword id="KW-0597">Phosphoprotein</keyword>
<keyword id="KW-1267">Proteomics identification</keyword>
<keyword id="KW-1185">Reference proteome</keyword>
<comment type="function">
    <text evidence="3 9">The SMN complex catalyzes the assembly of small nuclear ribonucleoproteins (snRNPs), the building blocks of the spliceosome, and thereby plays an important role in the splicing of cellular pre-mRNAs. Most spliceosomal snRNPs contain a common set of Sm proteins SNRPB, SNRPD1, SNRPD2, SNRPD3, SNRPE, SNRPF and SNRPG that assemble in a heptameric protein ring on the Sm site of the small nuclear RNA to form the core snRNP (Sm core). In the cytosol, the Sm proteins SNRPD1, SNRPD2, SNRPE, SNRPF and SNRPG are trapped in an inactive 6S pICln-Sm complex by the chaperone CLNS1A that controls the assembly of the core snRNP. To assemble core snRNPs, the SMN complex accepts the trapped 5Sm proteins from CLNS1A forming an intermediate. Binding of snRNA inside 5Sm triggers eviction of the SMN complex, thereby allowing binding of SNRPD3 and SNRPB to complete assembly of the core snRNP.</text>
</comment>
<comment type="subunit">
    <text evidence="3 4 6 7 8 9 10">Part of the core SMN complex that contains SMN1, GEMIN2/SIP1, DDX20/GEMIN3, GEMIN4, GEMIN5, GEMIN6, GEMIN7, GEMIN8 and STRAP/UNRIP (PubMed:11748230, PubMed:12065586, PubMed:15939020, PubMed:16314521, PubMed:17178713, PubMed:18984161). Part of the SMN-Sm complex that contains SMN1, GEMIN2/SIP1, DDX20/GEMIN3, GEMIN4, GEMIN5, GEMIN6, GEMIN7, GEMIN8, STRAP/UNRIP and the Sm proteins SNRPB, SNRPD1, SNRPD2, SNRPD3, SNRPE, SNRPF and SNRPG (PubMed:16314521, PubMed:18984161). Interacts with GEMIN7; the interaction is direct (PubMed:12065586, PubMed:15939020, PubMed:17178713, PubMed:33754639). Interacts with GEMIN8; the interaction is direct (PubMed:33754639). Interacts with SNRPB, SNRPD2, SNRPD3 and SNRPE; the interaction is direct (PubMed:11748230, PubMed:15939020).</text>
</comment>
<comment type="interaction">
    <interactant intactId="EBI-752301">
        <id>Q8WXD5</id>
    </interactant>
    <interactant intactId="EBI-17721098">
        <id>Q8WXI4-2</id>
        <label>ACOT11</label>
    </interactant>
    <organismsDiffer>false</organismsDiffer>
    <experiments>3</experiments>
</comment>
<comment type="interaction">
    <interactant intactId="EBI-752301">
        <id>Q8WXD5</id>
    </interactant>
    <interactant intactId="EBI-742054">
        <id>Q96D03</id>
        <label>DDIT4L</label>
    </interactant>
    <organismsDiffer>false</organismsDiffer>
    <experiments>3</experiments>
</comment>
<comment type="interaction">
    <interactant intactId="EBI-752301">
        <id>Q8WXD5</id>
    </interactant>
    <interactant intactId="EBI-715455">
        <id>Q9H840</id>
        <label>GEMIN7</label>
    </interactant>
    <organismsDiffer>false</organismsDiffer>
    <experiments>23</experiments>
</comment>
<comment type="interaction">
    <interactant intactId="EBI-752301">
        <id>Q8WXD5</id>
    </interactant>
    <interactant intactId="EBI-745409">
        <id>Q9BPW5</id>
        <label>RASL11B</label>
    </interactant>
    <organismsDiffer>false</organismsDiffer>
    <experiments>3</experiments>
</comment>
<comment type="interaction">
    <interactant intactId="EBI-752301">
        <id>Q8WXD5</id>
    </interactant>
    <interactant intactId="EBI-372177">
        <id>P62314</id>
        <label>SNRPD1</label>
    </interactant>
    <organismsDiffer>false</organismsDiffer>
    <experiments>2</experiments>
</comment>
<comment type="interaction">
    <interactant intactId="EBI-752301">
        <id>Q8WXD5</id>
    </interactant>
    <interactant intactId="EBI-297993">
        <id>P62316</id>
        <label>SNRPD2</label>
    </interactant>
    <organismsDiffer>false</organismsDiffer>
    <experiments>2</experiments>
</comment>
<comment type="interaction">
    <interactant intactId="EBI-752301">
        <id>Q8WXD5</id>
    </interactant>
    <interactant intactId="EBI-348082">
        <id>P62304</id>
        <label>SNRPE</label>
    </interactant>
    <organismsDiffer>false</organismsDiffer>
    <experiments>5</experiments>
</comment>
<comment type="interaction">
    <interactant intactId="EBI-752301">
        <id>Q8WXD5</id>
    </interactant>
    <interactant intactId="EBI-356900">
        <id>P62306</id>
        <label>SNRPF</label>
    </interactant>
    <organismsDiffer>false</organismsDiffer>
    <experiments>5</experiments>
</comment>
<comment type="interaction">
    <interactant intactId="EBI-752301">
        <id>Q8WXD5</id>
    </interactant>
    <interactant intactId="EBI-624585">
        <id>P62308</id>
        <label>SNRPG</label>
    </interactant>
    <organismsDiffer>false</organismsDiffer>
    <experiments>3</experiments>
</comment>
<comment type="interaction">
    <interactant intactId="EBI-752301">
        <id>Q8WXD5</id>
    </interactant>
    <interactant intactId="EBI-727414">
        <id>Q9Y3F4</id>
        <label>STRAP</label>
    </interactant>
    <organismsDiffer>false</organismsDiffer>
    <experiments>6</experiments>
</comment>
<comment type="interaction">
    <interactant intactId="EBI-752301">
        <id>Q8WXD5</id>
    </interactant>
    <interactant intactId="EBI-948613">
        <id>O94842</id>
        <label>TOX4</label>
    </interactant>
    <organismsDiffer>false</organismsDiffer>
    <experiments>3</experiments>
</comment>
<comment type="interaction">
    <interactant intactId="EBI-752301">
        <id>Q8WXD5</id>
    </interactant>
    <interactant intactId="EBI-6164519">
        <id>P12520</id>
        <label>vpr</label>
    </interactant>
    <organismsDiffer>true</organismsDiffer>
    <experiments>3</experiments>
</comment>
<comment type="subcellular location">
    <subcellularLocation>
        <location evidence="3">Nucleus</location>
        <location evidence="3">Nucleoplasm</location>
    </subcellularLocation>
    <subcellularLocation>
        <location evidence="3">Nucleus</location>
        <location evidence="3">Gem</location>
    </subcellularLocation>
    <subcellularLocation>
        <location evidence="3">Cytoplasm</location>
    </subcellularLocation>
    <text>Found both in the nucleoplasm and in nuclear bodies called gems (Gemini of Cajal bodies) that are often in proximity to Cajal (coiled) bodies. Also found in the cytoplasm.</text>
</comment>
<comment type="sequence caution" evidence="11">
    <conflict type="frameshift">
        <sequence resource="EMBL-CDS" id="BAB15660"/>
    </conflict>
</comment>
<sequence length="167" mass="18824">MSEWMKKGPLEWQDYIYKEVRVTASEKNEYKGWVLTTDPVSANIVLVNFLEDGSMSVTGIMGHAVQTVETMNEGDHRVREKLMHLFTSGDCKAYSPEDLEERKNSLKKWLEKNHIPITEQGDAPRTLCVAGVLTIDPPYGPENCSSSNEIILSRVQDLIEGHLTASQ</sequence>
<protein>
    <recommendedName>
        <fullName>Gem-associated protein 6</fullName>
        <shortName>Gemin-6</shortName>
    </recommendedName>
    <alternativeName>
        <fullName>SIP2</fullName>
    </alternativeName>
</protein>
<dbReference type="EMBL" id="AF453443">
    <property type="protein sequence ID" value="AAL48292.1"/>
    <property type="molecule type" value="mRNA"/>
</dbReference>
<dbReference type="EMBL" id="AK027112">
    <property type="protein sequence ID" value="BAB15660.1"/>
    <property type="status" value="ALT_FRAME"/>
    <property type="molecule type" value="mRNA"/>
</dbReference>
<dbReference type="EMBL" id="AK315627">
    <property type="protein sequence ID" value="BAG37995.1"/>
    <property type="molecule type" value="mRNA"/>
</dbReference>
<dbReference type="EMBL" id="AC018693">
    <property type="protein sequence ID" value="AAY24255.1"/>
    <property type="molecule type" value="Genomic_DNA"/>
</dbReference>
<dbReference type="EMBL" id="CH471053">
    <property type="protein sequence ID" value="EAX00360.1"/>
    <property type="molecule type" value="Genomic_DNA"/>
</dbReference>
<dbReference type="EMBL" id="BC018195">
    <property type="protein sequence ID" value="AAH18195.1"/>
    <property type="molecule type" value="mRNA"/>
</dbReference>
<dbReference type="CCDS" id="CCDS1799.1"/>
<dbReference type="RefSeq" id="NP_079051.9">
    <property type="nucleotide sequence ID" value="NM_024775.9"/>
</dbReference>
<dbReference type="PDB" id="1Y96">
    <property type="method" value="X-ray"/>
    <property type="resolution" value="2.00 A"/>
    <property type="chains" value="A/C=1-86"/>
</dbReference>
<dbReference type="PDB" id="7BBL">
    <property type="method" value="X-ray"/>
    <property type="resolution" value="1.52 A"/>
    <property type="chains" value="A/C=1-92"/>
</dbReference>
<dbReference type="PDBsum" id="1Y96"/>
<dbReference type="PDBsum" id="7BBL"/>
<dbReference type="SMR" id="Q8WXD5"/>
<dbReference type="BioGRID" id="122925">
    <property type="interactions" value="102"/>
</dbReference>
<dbReference type="ComplexPortal" id="CPX-6031">
    <property type="entry name" value="Survival motor neuron complex"/>
</dbReference>
<dbReference type="CORUM" id="Q8WXD5"/>
<dbReference type="DIP" id="DIP-41331N"/>
<dbReference type="FunCoup" id="Q8WXD5">
    <property type="interactions" value="2457"/>
</dbReference>
<dbReference type="IntAct" id="Q8WXD5">
    <property type="interactions" value="58"/>
</dbReference>
<dbReference type="MINT" id="Q8WXD5"/>
<dbReference type="STRING" id="9606.ENSP00000281950"/>
<dbReference type="GlyGen" id="Q8WXD5">
    <property type="glycosylation" value="1 site, 1 O-linked glycan (1 site)"/>
</dbReference>
<dbReference type="iPTMnet" id="Q8WXD5"/>
<dbReference type="PhosphoSitePlus" id="Q8WXD5"/>
<dbReference type="BioMuta" id="GEMIN6"/>
<dbReference type="DMDM" id="34921901"/>
<dbReference type="jPOST" id="Q8WXD5"/>
<dbReference type="MassIVE" id="Q8WXD5"/>
<dbReference type="PaxDb" id="9606-ENSP00000281950"/>
<dbReference type="PeptideAtlas" id="Q8WXD5"/>
<dbReference type="ProteomicsDB" id="75014"/>
<dbReference type="Pumba" id="Q8WXD5"/>
<dbReference type="Antibodypedia" id="29530">
    <property type="antibodies" value="174 antibodies from 26 providers"/>
</dbReference>
<dbReference type="DNASU" id="79833"/>
<dbReference type="Ensembl" id="ENST00000281950.8">
    <property type="protein sequence ID" value="ENSP00000281950.2"/>
    <property type="gene ID" value="ENSG00000152147.11"/>
</dbReference>
<dbReference type="GeneID" id="79833"/>
<dbReference type="KEGG" id="hsa:79833"/>
<dbReference type="MANE-Select" id="ENST00000281950.8">
    <property type="protein sequence ID" value="ENSP00000281950.2"/>
    <property type="RefSeq nucleotide sequence ID" value="NM_024775.10"/>
    <property type="RefSeq protein sequence ID" value="NP_079051.9"/>
</dbReference>
<dbReference type="UCSC" id="uc002rrc.4">
    <property type="organism name" value="human"/>
</dbReference>
<dbReference type="AGR" id="HGNC:20044"/>
<dbReference type="CTD" id="79833"/>
<dbReference type="DisGeNET" id="79833"/>
<dbReference type="GeneCards" id="GEMIN6"/>
<dbReference type="HGNC" id="HGNC:20044">
    <property type="gene designation" value="GEMIN6"/>
</dbReference>
<dbReference type="HPA" id="ENSG00000152147">
    <property type="expression patterns" value="Low tissue specificity"/>
</dbReference>
<dbReference type="MIM" id="607006">
    <property type="type" value="gene"/>
</dbReference>
<dbReference type="neXtProt" id="NX_Q8WXD5"/>
<dbReference type="OpenTargets" id="ENSG00000152147"/>
<dbReference type="PharmGKB" id="PA134952855"/>
<dbReference type="VEuPathDB" id="HostDB:ENSG00000152147"/>
<dbReference type="eggNOG" id="ENOG502RZTW">
    <property type="taxonomic scope" value="Eukaryota"/>
</dbReference>
<dbReference type="GeneTree" id="ENSGT00390000006712"/>
<dbReference type="HOGENOM" id="CLU_127294_0_0_1"/>
<dbReference type="InParanoid" id="Q8WXD5"/>
<dbReference type="OMA" id="LEWEDYV"/>
<dbReference type="OrthoDB" id="77463at2759"/>
<dbReference type="PAN-GO" id="Q8WXD5">
    <property type="GO annotations" value="2 GO annotations based on evolutionary models"/>
</dbReference>
<dbReference type="PhylomeDB" id="Q8WXD5"/>
<dbReference type="TreeFam" id="TF314693"/>
<dbReference type="PathwayCommons" id="Q8WXD5"/>
<dbReference type="Reactome" id="R-HSA-191859">
    <property type="pathway name" value="snRNP Assembly"/>
</dbReference>
<dbReference type="Reactome" id="R-HSA-9754678">
    <property type="pathway name" value="SARS-CoV-2 modulates host translation machinery"/>
</dbReference>
<dbReference type="SignaLink" id="Q8WXD5"/>
<dbReference type="SIGNOR" id="Q8WXD5"/>
<dbReference type="BioGRID-ORCS" id="79833">
    <property type="hits" value="619 hits in 1128 CRISPR screens"/>
</dbReference>
<dbReference type="CD-CODE" id="6F24707C">
    <property type="entry name" value="Cajal body"/>
</dbReference>
<dbReference type="ChiTaRS" id="GEMIN6">
    <property type="organism name" value="human"/>
</dbReference>
<dbReference type="EvolutionaryTrace" id="Q8WXD5"/>
<dbReference type="GeneWiki" id="Gem-associated_protein_6"/>
<dbReference type="GenomeRNAi" id="79833"/>
<dbReference type="Pharos" id="Q8WXD5">
    <property type="development level" value="Tbio"/>
</dbReference>
<dbReference type="PRO" id="PR:Q8WXD5"/>
<dbReference type="Proteomes" id="UP000005640">
    <property type="component" value="Chromosome 2"/>
</dbReference>
<dbReference type="RNAct" id="Q8WXD5">
    <property type="molecule type" value="protein"/>
</dbReference>
<dbReference type="Bgee" id="ENSG00000152147">
    <property type="expression patterns" value="Expressed in tendon of biceps brachii and 174 other cell types or tissues"/>
</dbReference>
<dbReference type="ExpressionAtlas" id="Q8WXD5">
    <property type="expression patterns" value="baseline and differential"/>
</dbReference>
<dbReference type="GO" id="GO:0005737">
    <property type="term" value="C:cytoplasm"/>
    <property type="evidence" value="ECO:0000314"/>
    <property type="project" value="UniProtKB"/>
</dbReference>
<dbReference type="GO" id="GO:0005829">
    <property type="term" value="C:cytosol"/>
    <property type="evidence" value="ECO:0000314"/>
    <property type="project" value="UniProtKB"/>
</dbReference>
<dbReference type="GO" id="GO:0097504">
    <property type="term" value="C:Gemini of Cajal bodies"/>
    <property type="evidence" value="ECO:0000314"/>
    <property type="project" value="UniProtKB"/>
</dbReference>
<dbReference type="GO" id="GO:0016604">
    <property type="term" value="C:nuclear body"/>
    <property type="evidence" value="ECO:0000314"/>
    <property type="project" value="UniProtKB"/>
</dbReference>
<dbReference type="GO" id="GO:0005654">
    <property type="term" value="C:nucleoplasm"/>
    <property type="evidence" value="ECO:0000314"/>
    <property type="project" value="UniProtKB"/>
</dbReference>
<dbReference type="GO" id="GO:0032797">
    <property type="term" value="C:SMN complex"/>
    <property type="evidence" value="ECO:0000314"/>
    <property type="project" value="UniProtKB"/>
</dbReference>
<dbReference type="GO" id="GO:0034719">
    <property type="term" value="C:SMN-Sm protein complex"/>
    <property type="evidence" value="ECO:0000314"/>
    <property type="project" value="UniProtKB"/>
</dbReference>
<dbReference type="GO" id="GO:0003723">
    <property type="term" value="F:RNA binding"/>
    <property type="evidence" value="ECO:0007669"/>
    <property type="project" value="InterPro"/>
</dbReference>
<dbReference type="GO" id="GO:0000398">
    <property type="term" value="P:mRNA splicing, via spliceosome"/>
    <property type="evidence" value="ECO:0000304"/>
    <property type="project" value="UniProtKB"/>
</dbReference>
<dbReference type="GO" id="GO:0000245">
    <property type="term" value="P:spliceosomal complex assembly"/>
    <property type="evidence" value="ECO:0007669"/>
    <property type="project" value="InterPro"/>
</dbReference>
<dbReference type="GO" id="GO:0000387">
    <property type="term" value="P:spliceosomal snRNP assembly"/>
    <property type="evidence" value="ECO:0000314"/>
    <property type="project" value="UniProtKB"/>
</dbReference>
<dbReference type="CDD" id="cd11676">
    <property type="entry name" value="Gemin6"/>
    <property type="match status" value="1"/>
</dbReference>
<dbReference type="FunFam" id="2.30.30.100:FF:000038">
    <property type="entry name" value="Gem-associated protein 6"/>
    <property type="match status" value="1"/>
</dbReference>
<dbReference type="Gene3D" id="2.30.30.100">
    <property type="match status" value="1"/>
</dbReference>
<dbReference type="InterPro" id="IPR047574">
    <property type="entry name" value="AD"/>
</dbReference>
<dbReference type="InterPro" id="IPR009422">
    <property type="entry name" value="Gemin6"/>
</dbReference>
<dbReference type="InterPro" id="IPR046856">
    <property type="entry name" value="Gemin6_C"/>
</dbReference>
<dbReference type="InterPro" id="IPR046857">
    <property type="entry name" value="Gemin6_Sm-like_dom"/>
</dbReference>
<dbReference type="InterPro" id="IPR047575">
    <property type="entry name" value="Sm"/>
</dbReference>
<dbReference type="PANTHER" id="PTHR14710">
    <property type="entry name" value="GEM-ASSOCIATED PROTEIN 6"/>
    <property type="match status" value="1"/>
</dbReference>
<dbReference type="PANTHER" id="PTHR14710:SF2">
    <property type="entry name" value="GEM-ASSOCIATED PROTEIN 6"/>
    <property type="match status" value="1"/>
</dbReference>
<dbReference type="Pfam" id="PF06372">
    <property type="entry name" value="Gemin6"/>
    <property type="match status" value="1"/>
</dbReference>
<dbReference type="Pfam" id="PF20417">
    <property type="entry name" value="Gemin6_C"/>
    <property type="match status" value="1"/>
</dbReference>
<dbReference type="PROSITE" id="PS52001">
    <property type="entry name" value="AD"/>
    <property type="match status" value="1"/>
</dbReference>
<dbReference type="PROSITE" id="PS52002">
    <property type="entry name" value="SM"/>
    <property type="match status" value="1"/>
</dbReference>
<evidence type="ECO:0000255" key="1">
    <source>
        <dbReference type="PROSITE-ProRule" id="PRU01345"/>
    </source>
</evidence>
<evidence type="ECO:0000255" key="2">
    <source>
        <dbReference type="PROSITE-ProRule" id="PRU01346"/>
    </source>
</evidence>
<evidence type="ECO:0000269" key="3">
    <source>
    </source>
</evidence>
<evidence type="ECO:0000269" key="4">
    <source>
    </source>
</evidence>
<evidence type="ECO:0000269" key="5">
    <source>
    </source>
</evidence>
<evidence type="ECO:0000269" key="6">
    <source>
    </source>
</evidence>
<evidence type="ECO:0000269" key="7">
    <source>
    </source>
</evidence>
<evidence type="ECO:0000269" key="8">
    <source>
    </source>
</evidence>
<evidence type="ECO:0000269" key="9">
    <source>
    </source>
</evidence>
<evidence type="ECO:0000269" key="10">
    <source>
    </source>
</evidence>
<evidence type="ECO:0000305" key="11"/>
<evidence type="ECO:0007744" key="12">
    <source>
        <dbReference type="PDB" id="7BBL"/>
    </source>
</evidence>
<evidence type="ECO:0007744" key="13">
    <source>
    </source>
</evidence>
<evidence type="ECO:0007744" key="14">
    <source>
    </source>
</evidence>
<evidence type="ECO:0007829" key="15">
    <source>
        <dbReference type="PDB" id="1Y96"/>
    </source>
</evidence>
<evidence type="ECO:0007829" key="16">
    <source>
        <dbReference type="PDB" id="7BBL"/>
    </source>
</evidence>
<gene>
    <name type="primary">GEMIN6</name>
</gene>
<feature type="chain" id="PRO_0000087460" description="Gem-associated protein 6">
    <location>
        <begin position="1"/>
        <end position="167"/>
    </location>
</feature>
<feature type="domain" description="Sm" evidence="2">
    <location>
        <begin position="7"/>
        <end position="74"/>
    </location>
</feature>
<feature type="domain" description="AD" evidence="1">
    <location>
        <begin position="69"/>
        <end position="167"/>
    </location>
</feature>
<feature type="modified residue" description="Phosphoserine" evidence="14">
    <location>
        <position position="95"/>
    </location>
</feature>
<feature type="modified residue" description="Phosphoserine" evidence="13">
    <location>
        <position position="166"/>
    </location>
</feature>
<feature type="sequence variant" id="VAR_020391" description="In dbSNP:rs1056104." evidence="5">
    <original>G</original>
    <variation>D</variation>
    <location>
        <position position="140"/>
    </location>
</feature>
<feature type="helix" evidence="15">
    <location>
        <begin position="3"/>
        <end position="6"/>
    </location>
</feature>
<feature type="helix" evidence="16">
    <location>
        <begin position="9"/>
        <end position="13"/>
    </location>
</feature>
<feature type="turn" evidence="16">
    <location>
        <begin position="14"/>
        <end position="17"/>
    </location>
</feature>
<feature type="strand" evidence="16">
    <location>
        <begin position="19"/>
        <end position="24"/>
    </location>
</feature>
<feature type="helix" evidence="16">
    <location>
        <begin position="25"/>
        <end position="27"/>
    </location>
</feature>
<feature type="strand" evidence="16">
    <location>
        <begin position="28"/>
        <end position="37"/>
    </location>
</feature>
<feature type="turn" evidence="16">
    <location>
        <begin position="39"/>
        <end position="41"/>
    </location>
</feature>
<feature type="strand" evidence="16">
    <location>
        <begin position="44"/>
        <end position="49"/>
    </location>
</feature>
<feature type="strand" evidence="16">
    <location>
        <begin position="55"/>
        <end position="60"/>
    </location>
</feature>
<feature type="helix" evidence="16">
    <location>
        <begin position="62"/>
        <end position="64"/>
    </location>
</feature>
<feature type="strand" evidence="16">
    <location>
        <begin position="65"/>
        <end position="72"/>
    </location>
</feature>
<feature type="helix" evidence="16">
    <location>
        <begin position="76"/>
        <end position="83"/>
    </location>
</feature>